<dbReference type="EC" id="5.3.3.2" evidence="1"/>
<dbReference type="EMBL" id="CP000847">
    <property type="protein sequence ID" value="ABV75111.1"/>
    <property type="molecule type" value="Genomic_DNA"/>
</dbReference>
<dbReference type="RefSeq" id="WP_012149741.1">
    <property type="nucleotide sequence ID" value="NC_009881.1"/>
</dbReference>
<dbReference type="SMR" id="A8GNY6"/>
<dbReference type="STRING" id="293614.A1C_04195"/>
<dbReference type="KEGG" id="rak:A1C_04195"/>
<dbReference type="eggNOG" id="COG1304">
    <property type="taxonomic scope" value="Bacteria"/>
</dbReference>
<dbReference type="HOGENOM" id="CLU_065515_1_0_5"/>
<dbReference type="Proteomes" id="UP000006830">
    <property type="component" value="Chromosome"/>
</dbReference>
<dbReference type="GO" id="GO:0005737">
    <property type="term" value="C:cytoplasm"/>
    <property type="evidence" value="ECO:0007669"/>
    <property type="project" value="UniProtKB-SubCell"/>
</dbReference>
<dbReference type="GO" id="GO:0010181">
    <property type="term" value="F:FMN binding"/>
    <property type="evidence" value="ECO:0007669"/>
    <property type="project" value="UniProtKB-UniRule"/>
</dbReference>
<dbReference type="GO" id="GO:0004452">
    <property type="term" value="F:isopentenyl-diphosphate delta-isomerase activity"/>
    <property type="evidence" value="ECO:0007669"/>
    <property type="project" value="UniProtKB-UniRule"/>
</dbReference>
<dbReference type="GO" id="GO:0000287">
    <property type="term" value="F:magnesium ion binding"/>
    <property type="evidence" value="ECO:0007669"/>
    <property type="project" value="UniProtKB-UniRule"/>
</dbReference>
<dbReference type="GO" id="GO:0070402">
    <property type="term" value="F:NADPH binding"/>
    <property type="evidence" value="ECO:0007669"/>
    <property type="project" value="UniProtKB-UniRule"/>
</dbReference>
<dbReference type="GO" id="GO:0016491">
    <property type="term" value="F:oxidoreductase activity"/>
    <property type="evidence" value="ECO:0007669"/>
    <property type="project" value="InterPro"/>
</dbReference>
<dbReference type="GO" id="GO:0008299">
    <property type="term" value="P:isoprenoid biosynthetic process"/>
    <property type="evidence" value="ECO:0007669"/>
    <property type="project" value="UniProtKB-UniRule"/>
</dbReference>
<dbReference type="CDD" id="cd02811">
    <property type="entry name" value="IDI-2_FMN"/>
    <property type="match status" value="1"/>
</dbReference>
<dbReference type="Gene3D" id="3.20.20.70">
    <property type="entry name" value="Aldolase class I"/>
    <property type="match status" value="1"/>
</dbReference>
<dbReference type="HAMAP" id="MF_00354">
    <property type="entry name" value="Idi_2"/>
    <property type="match status" value="1"/>
</dbReference>
<dbReference type="InterPro" id="IPR013785">
    <property type="entry name" value="Aldolase_TIM"/>
</dbReference>
<dbReference type="InterPro" id="IPR000262">
    <property type="entry name" value="FMN-dep_DH"/>
</dbReference>
<dbReference type="InterPro" id="IPR011179">
    <property type="entry name" value="IPdP_isomerase"/>
</dbReference>
<dbReference type="NCBIfam" id="TIGR02151">
    <property type="entry name" value="IPP_isom_2"/>
    <property type="match status" value="1"/>
</dbReference>
<dbReference type="PANTHER" id="PTHR43665">
    <property type="entry name" value="ISOPENTENYL-DIPHOSPHATE DELTA-ISOMERASE"/>
    <property type="match status" value="1"/>
</dbReference>
<dbReference type="PANTHER" id="PTHR43665:SF1">
    <property type="entry name" value="ISOPENTENYL-DIPHOSPHATE DELTA-ISOMERASE"/>
    <property type="match status" value="1"/>
</dbReference>
<dbReference type="Pfam" id="PF01070">
    <property type="entry name" value="FMN_dh"/>
    <property type="match status" value="2"/>
</dbReference>
<dbReference type="PIRSF" id="PIRSF003314">
    <property type="entry name" value="IPP_isomerase"/>
    <property type="match status" value="1"/>
</dbReference>
<dbReference type="SUPFAM" id="SSF51395">
    <property type="entry name" value="FMN-linked oxidoreductases"/>
    <property type="match status" value="1"/>
</dbReference>
<feature type="chain" id="PRO_1000048453" description="Isopentenyl-diphosphate delta-isomerase">
    <location>
        <begin position="1"/>
        <end position="342"/>
    </location>
</feature>
<feature type="binding site" evidence="1">
    <location>
        <begin position="11"/>
        <end position="12"/>
    </location>
    <ligand>
        <name>substrate</name>
    </ligand>
</feature>
<feature type="binding site" evidence="1">
    <location>
        <position position="68"/>
    </location>
    <ligand>
        <name>FMN</name>
        <dbReference type="ChEBI" id="CHEBI:58210"/>
    </ligand>
</feature>
<feature type="binding site" evidence="1">
    <location>
        <begin position="69"/>
        <end position="71"/>
    </location>
    <ligand>
        <name>FMN</name>
        <dbReference type="ChEBI" id="CHEBI:58210"/>
    </ligand>
</feature>
<feature type="binding site" evidence="1">
    <location>
        <begin position="99"/>
        <end position="101"/>
    </location>
    <ligand>
        <name>substrate</name>
    </ligand>
</feature>
<feature type="binding site" evidence="1">
    <location>
        <position position="99"/>
    </location>
    <ligand>
        <name>FMN</name>
        <dbReference type="ChEBI" id="CHEBI:58210"/>
    </ligand>
</feature>
<feature type="binding site" evidence="1">
    <location>
        <position position="127"/>
    </location>
    <ligand>
        <name>FMN</name>
        <dbReference type="ChEBI" id="CHEBI:58210"/>
    </ligand>
</feature>
<feature type="binding site" evidence="1">
    <location>
        <position position="162"/>
    </location>
    <ligand>
        <name>substrate</name>
    </ligand>
</feature>
<feature type="binding site" evidence="1">
    <location>
        <position position="163"/>
    </location>
    <ligand>
        <name>Mg(2+)</name>
        <dbReference type="ChEBI" id="CHEBI:18420"/>
    </ligand>
</feature>
<feature type="binding site" evidence="1">
    <location>
        <position position="194"/>
    </location>
    <ligand>
        <name>FMN</name>
        <dbReference type="ChEBI" id="CHEBI:58210"/>
    </ligand>
</feature>
<feature type="binding site" evidence="1">
    <location>
        <position position="224"/>
    </location>
    <ligand>
        <name>FMN</name>
        <dbReference type="ChEBI" id="CHEBI:58210"/>
    </ligand>
</feature>
<feature type="binding site" evidence="1">
    <location>
        <begin position="274"/>
        <end position="276"/>
    </location>
    <ligand>
        <name>FMN</name>
        <dbReference type="ChEBI" id="CHEBI:58210"/>
    </ligand>
</feature>
<feature type="binding site" evidence="1">
    <location>
        <begin position="295"/>
        <end position="296"/>
    </location>
    <ligand>
        <name>FMN</name>
        <dbReference type="ChEBI" id="CHEBI:58210"/>
    </ligand>
</feature>
<protein>
    <recommendedName>
        <fullName evidence="1">Isopentenyl-diphosphate delta-isomerase</fullName>
        <shortName evidence="1">IPP isomerase</shortName>
        <ecNumber evidence="1">5.3.3.2</ecNumber>
    </recommendedName>
    <alternativeName>
        <fullName evidence="1">Isopentenyl diphosphate:dimethylallyl diphosphate isomerase</fullName>
    </alternativeName>
    <alternativeName>
        <fullName evidence="1">Isopentenyl pyrophosphate isomerase</fullName>
    </alternativeName>
    <alternativeName>
        <fullName evidence="1">Type 2 isopentenyl diphosphate isomerase</fullName>
        <shortName evidence="1">IDI-2</shortName>
    </alternativeName>
</protein>
<reference key="1">
    <citation type="submission" date="2007-09" db="EMBL/GenBank/DDBJ databases">
        <title>Complete genome sequence of Rickettsia akari.</title>
        <authorList>
            <person name="Madan A."/>
            <person name="Fahey J."/>
            <person name="Helton E."/>
            <person name="Ketteman M."/>
            <person name="Madan A."/>
            <person name="Rodrigues S."/>
            <person name="Sanchez A."/>
            <person name="Whiting M."/>
            <person name="Dasch G."/>
            <person name="Eremeeva M."/>
        </authorList>
    </citation>
    <scope>NUCLEOTIDE SEQUENCE [LARGE SCALE GENOMIC DNA]</scope>
    <source>
        <strain>Hartford</strain>
    </source>
</reference>
<evidence type="ECO:0000255" key="1">
    <source>
        <dbReference type="HAMAP-Rule" id="MF_00354"/>
    </source>
</evidence>
<organism>
    <name type="scientific">Rickettsia akari (strain Hartford)</name>
    <dbReference type="NCBI Taxonomy" id="293614"/>
    <lineage>
        <taxon>Bacteria</taxon>
        <taxon>Pseudomonadati</taxon>
        <taxon>Pseudomonadota</taxon>
        <taxon>Alphaproteobacteria</taxon>
        <taxon>Rickettsiales</taxon>
        <taxon>Rickettsiaceae</taxon>
        <taxon>Rickettsieae</taxon>
        <taxon>Rickettsia</taxon>
        <taxon>spotted fever group</taxon>
    </lineage>
</organism>
<sequence length="342" mass="37133">MPKDQNLDIARKQDHIEINLTKNVESTLKSGFESIQFIHNALPEINYDIIDTSTTFLGKYLQAPILISSMTGGTARARDINYRLAQVAQKAGIAMGLGSMRVLLTKPDTITTFAIRHIAPDIPLLANIGAVQLNYGVTPKECQYLVDVVKADALILHLNVLQELTQPEGNRNWENLLPRIQELVNYLSVPVVVKEVGYGLSKKVAESLIKVGVEVLDIAGSGGTSWSQVEAYRATNSLQNRIASSFISWGIPTLDSLKMVREVSGNIAIIASGGLKSGIDGAKAIRMGASIFGLAGQLLKAADISENLVSEEIQLIIEQLKITMICTGSRTLKDLAKAEIRL</sequence>
<gene>
    <name evidence="1" type="primary">fni</name>
    <name type="ordered locus">A1C_04195</name>
</gene>
<keyword id="KW-0963">Cytoplasm</keyword>
<keyword id="KW-0285">Flavoprotein</keyword>
<keyword id="KW-0288">FMN</keyword>
<keyword id="KW-0413">Isomerase</keyword>
<keyword id="KW-0414">Isoprene biosynthesis</keyword>
<keyword id="KW-0460">Magnesium</keyword>
<keyword id="KW-0479">Metal-binding</keyword>
<keyword id="KW-0521">NADP</keyword>
<comment type="function">
    <text evidence="1">Involved in the biosynthesis of isoprenoids. Catalyzes the 1,3-allylic rearrangement of the homoallylic substrate isopentenyl (IPP) to its allylic isomer, dimethylallyl diphosphate (DMAPP).</text>
</comment>
<comment type="catalytic activity">
    <reaction evidence="1">
        <text>isopentenyl diphosphate = dimethylallyl diphosphate</text>
        <dbReference type="Rhea" id="RHEA:23284"/>
        <dbReference type="ChEBI" id="CHEBI:57623"/>
        <dbReference type="ChEBI" id="CHEBI:128769"/>
        <dbReference type="EC" id="5.3.3.2"/>
    </reaction>
</comment>
<comment type="cofactor">
    <cofactor evidence="1">
        <name>FMN</name>
        <dbReference type="ChEBI" id="CHEBI:58210"/>
    </cofactor>
</comment>
<comment type="cofactor">
    <cofactor evidence="1">
        <name>NADPH</name>
        <dbReference type="ChEBI" id="CHEBI:57783"/>
    </cofactor>
</comment>
<comment type="cofactor">
    <cofactor evidence="1">
        <name>Mg(2+)</name>
        <dbReference type="ChEBI" id="CHEBI:18420"/>
    </cofactor>
</comment>
<comment type="subunit">
    <text evidence="1">Homooctamer. Dimer of tetramers.</text>
</comment>
<comment type="subcellular location">
    <subcellularLocation>
        <location evidence="1">Cytoplasm</location>
    </subcellularLocation>
</comment>
<comment type="similarity">
    <text evidence="1">Belongs to the IPP isomerase type 2 family.</text>
</comment>
<proteinExistence type="inferred from homology"/>
<accession>A8GNY6</accession>
<name>IDI2_RICAH</name>